<name>RNF13_RAT</name>
<protein>
    <recommendedName>
        <fullName>E3 ubiquitin-protein ligase RNF13</fullName>
        <ecNumber>2.3.2.27</ecNumber>
    </recommendedName>
    <alternativeName>
        <fullName>RING finger protein 13</fullName>
    </alternativeName>
</protein>
<sequence>MLLSIGMLMLSATQVYTILTVQLFAFLNLLPVEADILAYNFENASQTFEDLPARFGYRLPAEGLKGFLINSKPENACEPIVPPPLKDNSSGTFIVLIRRLDCNFDIKVLNAQRAGYKAAIVHNVDSDDLISMGSNDIDILKKIDIPSVFIGESSANSLKDEFTYEKGGHVILVPELSLPLEYYLIPFLIIVGICLILIVIFMITKFVQDRHRNRRNRLRKDQLKKLPVHKFKKGDEYDVCAICLEEYEDGDKLRILPCSHAYHCKCVDPWLTKTKKTCPVCKQKVVPSQGDSDSDTDSSQEENQVSEHTPLLPPSASARTQSFGSLSESHSHHMTESSDYEDDDNEETDSSDADNEITDHSVVVQLQPNGEPDYNIANTV</sequence>
<reference key="1">
    <citation type="journal article" date="2004" name="Genome Res.">
        <title>The status, quality, and expansion of the NIH full-length cDNA project: the Mammalian Gene Collection (MGC).</title>
        <authorList>
            <consortium name="The MGC Project Team"/>
        </authorList>
    </citation>
    <scope>NUCLEOTIDE SEQUENCE [LARGE SCALE MRNA]</scope>
    <source>
        <tissue>Kidney</tissue>
    </source>
</reference>
<evidence type="ECO:0000250" key="1">
    <source>
        <dbReference type="UniProtKB" id="O43567"/>
    </source>
</evidence>
<evidence type="ECO:0000250" key="2">
    <source>
        <dbReference type="UniProtKB" id="O54965"/>
    </source>
</evidence>
<evidence type="ECO:0000255" key="3"/>
<evidence type="ECO:0000255" key="4">
    <source>
        <dbReference type="PROSITE-ProRule" id="PRU00175"/>
    </source>
</evidence>
<evidence type="ECO:0000256" key="5">
    <source>
        <dbReference type="SAM" id="MobiDB-lite"/>
    </source>
</evidence>
<feature type="signal peptide" evidence="3">
    <location>
        <begin position="1"/>
        <end position="34"/>
    </location>
</feature>
<feature type="chain" id="PRO_0000307369" description="E3 ubiquitin-protein ligase RNF13">
    <location>
        <begin position="35"/>
        <end position="380"/>
    </location>
</feature>
<feature type="topological domain" description="Lumenal" evidence="3">
    <location>
        <begin position="35"/>
        <end position="182"/>
    </location>
</feature>
<feature type="transmembrane region" description="Helical" evidence="3">
    <location>
        <begin position="183"/>
        <end position="203"/>
    </location>
</feature>
<feature type="topological domain" description="Cytoplasmic" evidence="3">
    <location>
        <begin position="204"/>
        <end position="380"/>
    </location>
</feature>
<feature type="domain" description="PA">
    <location>
        <begin position="64"/>
        <end position="160"/>
    </location>
</feature>
<feature type="zinc finger region" description="RING-type; atypical" evidence="4">
    <location>
        <begin position="240"/>
        <end position="282"/>
    </location>
</feature>
<feature type="region of interest" description="Disordered" evidence="5">
    <location>
        <begin position="285"/>
        <end position="380"/>
    </location>
</feature>
<feature type="compositionally biased region" description="Acidic residues" evidence="5">
    <location>
        <begin position="338"/>
        <end position="356"/>
    </location>
</feature>
<feature type="glycosylation site" description="N-linked (GlcNAc...) asparagine" evidence="3">
    <location>
        <position position="88"/>
    </location>
</feature>
<comment type="function">
    <text evidence="1">E3 ubiquitin-protein ligase that regulates cell proliferation. Involved in apoptosis regulation. Mediates ER stress-induced activation of JNK signaling pathway and apoptosis by promoting ERN1 activation and splicing of XBP1 mRNA. Also involved in protein trafficking and localization.</text>
</comment>
<comment type="catalytic activity">
    <reaction evidence="1">
        <text>S-ubiquitinyl-[E2 ubiquitin-conjugating enzyme]-L-cysteine + [acceptor protein]-L-lysine = [E2 ubiquitin-conjugating enzyme]-L-cysteine + N(6)-ubiquitinyl-[acceptor protein]-L-lysine.</text>
        <dbReference type="EC" id="2.3.2.27"/>
    </reaction>
</comment>
<comment type="pathway">
    <text evidence="1">Protein modification; protein ubiquitination.</text>
</comment>
<comment type="subunit">
    <text evidence="1">Interacts with ERN1.</text>
</comment>
<comment type="subcellular location">
    <subcellularLocation>
        <location evidence="1">Endoplasmic reticulum membrane</location>
        <topology evidence="3">Single-pass type I membrane protein</topology>
    </subcellularLocation>
    <subcellularLocation>
        <location evidence="2">Late endosome membrane</location>
        <topology evidence="3">Single-pass type I membrane protein</topology>
    </subcellularLocation>
    <subcellularLocation>
        <location evidence="1">Lysosome membrane</location>
        <topology evidence="3">Single-pass type I membrane protein</topology>
    </subcellularLocation>
    <subcellularLocation>
        <location evidence="2">Nucleus inner membrane</location>
        <topology evidence="3">Single-pass type I membrane protein</topology>
    </subcellularLocation>
    <text evidence="2">Under certain conditions, relocalizes to recycling endosomes and to the inner nuclear membrane.</text>
</comment>
<comment type="domain">
    <text evidence="1">The RING-type zinc finger domain is required for E3 ligase activity and for promoting ER stress-induced JNK activation and apoptosis.</text>
</comment>
<comment type="PTM">
    <text evidence="1">Autoubiquitinated.</text>
</comment>
<keyword id="KW-0256">Endoplasmic reticulum</keyword>
<keyword id="KW-0967">Endosome</keyword>
<keyword id="KW-0325">Glycoprotein</keyword>
<keyword id="KW-0458">Lysosome</keyword>
<keyword id="KW-0472">Membrane</keyword>
<keyword id="KW-0479">Metal-binding</keyword>
<keyword id="KW-0539">Nucleus</keyword>
<keyword id="KW-1185">Reference proteome</keyword>
<keyword id="KW-0732">Signal</keyword>
<keyword id="KW-0808">Transferase</keyword>
<keyword id="KW-0812">Transmembrane</keyword>
<keyword id="KW-1133">Transmembrane helix</keyword>
<keyword id="KW-0832">Ubl conjugation</keyword>
<keyword id="KW-0833">Ubl conjugation pathway</keyword>
<keyword id="KW-0862">Zinc</keyword>
<keyword id="KW-0863">Zinc-finger</keyword>
<proteinExistence type="evidence at transcript level"/>
<dbReference type="EC" id="2.3.2.27"/>
<dbReference type="EMBL" id="BC081881">
    <property type="protein sequence ID" value="AAH81881.1"/>
    <property type="molecule type" value="mRNA"/>
</dbReference>
<dbReference type="RefSeq" id="NP_001102914.1">
    <property type="nucleotide sequence ID" value="NM_001109444.2"/>
</dbReference>
<dbReference type="RefSeq" id="XP_038959052.1">
    <property type="nucleotide sequence ID" value="XM_039103124.2"/>
</dbReference>
<dbReference type="SMR" id="Q66HG0"/>
<dbReference type="BioGRID" id="596506">
    <property type="interactions" value="1"/>
</dbReference>
<dbReference type="FunCoup" id="Q66HG0">
    <property type="interactions" value="2804"/>
</dbReference>
<dbReference type="STRING" id="10116.ENSRNOP00000060441"/>
<dbReference type="GlyCosmos" id="Q66HG0">
    <property type="glycosylation" value="1 site, No reported glycans"/>
</dbReference>
<dbReference type="GlyGen" id="Q66HG0">
    <property type="glycosylation" value="1 site"/>
</dbReference>
<dbReference type="PhosphoSitePlus" id="Q66HG0"/>
<dbReference type="PaxDb" id="10116-ENSRNOP00000060441"/>
<dbReference type="Ensembl" id="ENSRNOT00000118325.1">
    <property type="protein sequence ID" value="ENSRNOP00000093374.1"/>
    <property type="gene ID" value="ENSRNOG00000029209.5"/>
</dbReference>
<dbReference type="GeneID" id="681578"/>
<dbReference type="KEGG" id="rno:681578"/>
<dbReference type="UCSC" id="RGD:1594062">
    <property type="organism name" value="rat"/>
</dbReference>
<dbReference type="AGR" id="RGD:1594062"/>
<dbReference type="CTD" id="11342"/>
<dbReference type="RGD" id="1594062">
    <property type="gene designation" value="Rnf13"/>
</dbReference>
<dbReference type="eggNOG" id="KOG4628">
    <property type="taxonomic scope" value="Eukaryota"/>
</dbReference>
<dbReference type="GeneTree" id="ENSGT00940000154942"/>
<dbReference type="HOGENOM" id="CLU_035275_1_1_1"/>
<dbReference type="InParanoid" id="Q66HG0"/>
<dbReference type="OMA" id="VYTIFTV"/>
<dbReference type="OrthoDB" id="8062037at2759"/>
<dbReference type="PhylomeDB" id="Q66HG0"/>
<dbReference type="UniPathway" id="UPA00143"/>
<dbReference type="PRO" id="PR:Q66HG0"/>
<dbReference type="Proteomes" id="UP000002494">
    <property type="component" value="Chromosome 2"/>
</dbReference>
<dbReference type="Bgee" id="ENSRNOG00000029209">
    <property type="expression patterns" value="Expressed in lung and 20 other cell types or tissues"/>
</dbReference>
<dbReference type="GO" id="GO:0005737">
    <property type="term" value="C:cytoplasm"/>
    <property type="evidence" value="ECO:0000318"/>
    <property type="project" value="GO_Central"/>
</dbReference>
<dbReference type="GO" id="GO:0005829">
    <property type="term" value="C:cytosol"/>
    <property type="evidence" value="ECO:0007669"/>
    <property type="project" value="Ensembl"/>
</dbReference>
<dbReference type="GO" id="GO:0005783">
    <property type="term" value="C:endoplasmic reticulum"/>
    <property type="evidence" value="ECO:0000250"/>
    <property type="project" value="UniProtKB"/>
</dbReference>
<dbReference type="GO" id="GO:0005789">
    <property type="term" value="C:endoplasmic reticulum membrane"/>
    <property type="evidence" value="ECO:0007669"/>
    <property type="project" value="UniProtKB-SubCell"/>
</dbReference>
<dbReference type="GO" id="GO:0005768">
    <property type="term" value="C:endosome"/>
    <property type="evidence" value="ECO:0000266"/>
    <property type="project" value="RGD"/>
</dbReference>
<dbReference type="GO" id="GO:0031902">
    <property type="term" value="C:late endosome membrane"/>
    <property type="evidence" value="ECO:0000250"/>
    <property type="project" value="UniProtKB"/>
</dbReference>
<dbReference type="GO" id="GO:0005765">
    <property type="term" value="C:lysosomal membrane"/>
    <property type="evidence" value="ECO:0000250"/>
    <property type="project" value="UniProtKB"/>
</dbReference>
<dbReference type="GO" id="GO:0005637">
    <property type="term" value="C:nuclear inner membrane"/>
    <property type="evidence" value="ECO:0007669"/>
    <property type="project" value="UniProtKB-SubCell"/>
</dbReference>
<dbReference type="GO" id="GO:0005654">
    <property type="term" value="C:nucleoplasm"/>
    <property type="evidence" value="ECO:0007669"/>
    <property type="project" value="Ensembl"/>
</dbReference>
<dbReference type="GO" id="GO:0008432">
    <property type="term" value="F:JUN kinase binding"/>
    <property type="evidence" value="ECO:0000250"/>
    <property type="project" value="UniProtKB"/>
</dbReference>
<dbReference type="GO" id="GO:0061630">
    <property type="term" value="F:ubiquitin protein ligase activity"/>
    <property type="evidence" value="ECO:0000266"/>
    <property type="project" value="RGD"/>
</dbReference>
<dbReference type="GO" id="GO:0004842">
    <property type="term" value="F:ubiquitin-protein transferase activity"/>
    <property type="evidence" value="ECO:0000250"/>
    <property type="project" value="UniProtKB"/>
</dbReference>
<dbReference type="GO" id="GO:0008270">
    <property type="term" value="F:zinc ion binding"/>
    <property type="evidence" value="ECO:0007669"/>
    <property type="project" value="UniProtKB-KW"/>
</dbReference>
<dbReference type="GO" id="GO:0051640">
    <property type="term" value="P:organelle localization"/>
    <property type="evidence" value="ECO:0000266"/>
    <property type="project" value="RGD"/>
</dbReference>
<dbReference type="GO" id="GO:0046330">
    <property type="term" value="P:positive regulation of JNK cascade"/>
    <property type="evidence" value="ECO:0000250"/>
    <property type="project" value="UniProtKB"/>
</dbReference>
<dbReference type="GO" id="GO:0051865">
    <property type="term" value="P:protein autoubiquitination"/>
    <property type="evidence" value="ECO:0000250"/>
    <property type="project" value="UniProtKB"/>
</dbReference>
<dbReference type="GO" id="GO:0006511">
    <property type="term" value="P:ubiquitin-dependent protein catabolic process"/>
    <property type="evidence" value="ECO:0000318"/>
    <property type="project" value="GO_Central"/>
</dbReference>
<dbReference type="CDD" id="cd02123">
    <property type="entry name" value="PA_C_RZF_like"/>
    <property type="match status" value="1"/>
</dbReference>
<dbReference type="CDD" id="cd16796">
    <property type="entry name" value="RING-H2_RNF13"/>
    <property type="match status" value="1"/>
</dbReference>
<dbReference type="FunFam" id="3.50.30.30:FF:000012">
    <property type="entry name" value="E3 ubiquitin-protein ligase RNF13"/>
    <property type="match status" value="1"/>
</dbReference>
<dbReference type="FunFam" id="3.30.40.10:FF:000099">
    <property type="entry name" value="E3 ubiquitin-protein ligase RNF167"/>
    <property type="match status" value="1"/>
</dbReference>
<dbReference type="Gene3D" id="3.50.30.30">
    <property type="match status" value="1"/>
</dbReference>
<dbReference type="Gene3D" id="3.30.40.10">
    <property type="entry name" value="Zinc/RING finger domain, C3HC4 (zinc finger)"/>
    <property type="match status" value="1"/>
</dbReference>
<dbReference type="InterPro" id="IPR051653">
    <property type="entry name" value="E3_ligase_sorting_rcpt"/>
</dbReference>
<dbReference type="InterPro" id="IPR046450">
    <property type="entry name" value="PA_dom_sf"/>
</dbReference>
<dbReference type="InterPro" id="IPR003137">
    <property type="entry name" value="PA_domain"/>
</dbReference>
<dbReference type="InterPro" id="IPR001841">
    <property type="entry name" value="Znf_RING"/>
</dbReference>
<dbReference type="InterPro" id="IPR013083">
    <property type="entry name" value="Znf_RING/FYVE/PHD"/>
</dbReference>
<dbReference type="InterPro" id="IPR044744">
    <property type="entry name" value="ZNRF4/RNF13/RNF167_PA"/>
</dbReference>
<dbReference type="PANTHER" id="PTHR47168:SF1">
    <property type="entry name" value="OS02G0798600 PROTEIN"/>
    <property type="match status" value="1"/>
</dbReference>
<dbReference type="PANTHER" id="PTHR47168">
    <property type="entry name" value="RING ZINC FINGER DOMAIN SUPERFAMILY PROTEIN-RELATED"/>
    <property type="match status" value="1"/>
</dbReference>
<dbReference type="Pfam" id="PF02225">
    <property type="entry name" value="PA"/>
    <property type="match status" value="1"/>
</dbReference>
<dbReference type="Pfam" id="PF13639">
    <property type="entry name" value="zf-RING_2"/>
    <property type="match status" value="1"/>
</dbReference>
<dbReference type="SMART" id="SM00184">
    <property type="entry name" value="RING"/>
    <property type="match status" value="1"/>
</dbReference>
<dbReference type="SUPFAM" id="SSF52025">
    <property type="entry name" value="PA domain"/>
    <property type="match status" value="1"/>
</dbReference>
<dbReference type="SUPFAM" id="SSF57850">
    <property type="entry name" value="RING/U-box"/>
    <property type="match status" value="1"/>
</dbReference>
<dbReference type="PROSITE" id="PS50089">
    <property type="entry name" value="ZF_RING_2"/>
    <property type="match status" value="1"/>
</dbReference>
<organism>
    <name type="scientific">Rattus norvegicus</name>
    <name type="common">Rat</name>
    <dbReference type="NCBI Taxonomy" id="10116"/>
    <lineage>
        <taxon>Eukaryota</taxon>
        <taxon>Metazoa</taxon>
        <taxon>Chordata</taxon>
        <taxon>Craniata</taxon>
        <taxon>Vertebrata</taxon>
        <taxon>Euteleostomi</taxon>
        <taxon>Mammalia</taxon>
        <taxon>Eutheria</taxon>
        <taxon>Euarchontoglires</taxon>
        <taxon>Glires</taxon>
        <taxon>Rodentia</taxon>
        <taxon>Myomorpha</taxon>
        <taxon>Muroidea</taxon>
        <taxon>Muridae</taxon>
        <taxon>Murinae</taxon>
        <taxon>Rattus</taxon>
    </lineage>
</organism>
<accession>Q66HG0</accession>
<gene>
    <name type="primary">Rnf13</name>
</gene>